<proteinExistence type="inferred from homology"/>
<evidence type="ECO:0000255" key="1">
    <source>
        <dbReference type="HAMAP-Rule" id="MF_00256"/>
    </source>
</evidence>
<evidence type="ECO:0000256" key="2">
    <source>
        <dbReference type="SAM" id="MobiDB-lite"/>
    </source>
</evidence>
<evidence type="ECO:0000305" key="3"/>
<comment type="similarity">
    <text evidence="1">Belongs to the eukaryotic ribosomal protein eL15 family.</text>
</comment>
<accession>Q3IUG6</accession>
<reference key="1">
    <citation type="journal article" date="2005" name="Genome Res.">
        <title>Living with two extremes: conclusions from the genome sequence of Natronomonas pharaonis.</title>
        <authorList>
            <person name="Falb M."/>
            <person name="Pfeiffer F."/>
            <person name="Palm P."/>
            <person name="Rodewald K."/>
            <person name="Hickmann V."/>
            <person name="Tittor J."/>
            <person name="Oesterhelt D."/>
        </authorList>
    </citation>
    <scope>NUCLEOTIDE SEQUENCE [LARGE SCALE GENOMIC DNA]</scope>
    <source>
        <strain>ATCC 35678 / DSM 2160 / CIP 103997 / JCM 8858 / NBRC 14720 / NCIMB 2260 / Gabara</strain>
    </source>
</reference>
<gene>
    <name evidence="1" type="primary">rpl15e</name>
    <name type="ordered locus">NP_0246A</name>
</gene>
<name>RL15E_NATPD</name>
<organism>
    <name type="scientific">Natronomonas pharaonis (strain ATCC 35678 / DSM 2160 / CIP 103997 / JCM 8858 / NBRC 14720 / NCIMB 2260 / Gabara)</name>
    <name type="common">Halobacterium pharaonis</name>
    <dbReference type="NCBI Taxonomy" id="348780"/>
    <lineage>
        <taxon>Archaea</taxon>
        <taxon>Methanobacteriati</taxon>
        <taxon>Methanobacteriota</taxon>
        <taxon>Stenosarchaea group</taxon>
        <taxon>Halobacteria</taxon>
        <taxon>Halobacteriales</taxon>
        <taxon>Haloarculaceae</taxon>
        <taxon>Natronomonas</taxon>
    </lineage>
</organism>
<keyword id="KW-1185">Reference proteome</keyword>
<keyword id="KW-0687">Ribonucleoprotein</keyword>
<keyword id="KW-0689">Ribosomal protein</keyword>
<dbReference type="EMBL" id="CR936257">
    <property type="protein sequence ID" value="CAI48214.1"/>
    <property type="molecule type" value="Genomic_DNA"/>
</dbReference>
<dbReference type="RefSeq" id="WP_011321853.1">
    <property type="nucleotide sequence ID" value="NC_007426.1"/>
</dbReference>
<dbReference type="SMR" id="Q3IUG6"/>
<dbReference type="STRING" id="348780.NP_0246A"/>
<dbReference type="EnsemblBacteria" id="CAI48214">
    <property type="protein sequence ID" value="CAI48214"/>
    <property type="gene ID" value="NP_0246A"/>
</dbReference>
<dbReference type="GeneID" id="3703126"/>
<dbReference type="KEGG" id="nph:NP_0246A"/>
<dbReference type="eggNOG" id="arCOG04209">
    <property type="taxonomic scope" value="Archaea"/>
</dbReference>
<dbReference type="HOGENOM" id="CLU_080796_1_0_2"/>
<dbReference type="OrthoDB" id="8183at2157"/>
<dbReference type="Proteomes" id="UP000002698">
    <property type="component" value="Chromosome"/>
</dbReference>
<dbReference type="GO" id="GO:0022625">
    <property type="term" value="C:cytosolic large ribosomal subunit"/>
    <property type="evidence" value="ECO:0007669"/>
    <property type="project" value="TreeGrafter"/>
</dbReference>
<dbReference type="GO" id="GO:0003723">
    <property type="term" value="F:RNA binding"/>
    <property type="evidence" value="ECO:0007669"/>
    <property type="project" value="TreeGrafter"/>
</dbReference>
<dbReference type="GO" id="GO:0003735">
    <property type="term" value="F:structural constituent of ribosome"/>
    <property type="evidence" value="ECO:0007669"/>
    <property type="project" value="InterPro"/>
</dbReference>
<dbReference type="GO" id="GO:0002181">
    <property type="term" value="P:cytoplasmic translation"/>
    <property type="evidence" value="ECO:0007669"/>
    <property type="project" value="TreeGrafter"/>
</dbReference>
<dbReference type="FunFam" id="3.40.1120.10:FF:000002">
    <property type="entry name" value="50S ribosomal protein L15e"/>
    <property type="match status" value="1"/>
</dbReference>
<dbReference type="Gene3D" id="3.40.1120.10">
    <property type="entry name" value="Ribosomal protein l15e"/>
    <property type="match status" value="1"/>
</dbReference>
<dbReference type="HAMAP" id="MF_00256">
    <property type="entry name" value="Ribosomal_eL15"/>
    <property type="match status" value="1"/>
</dbReference>
<dbReference type="InterPro" id="IPR024794">
    <property type="entry name" value="Rbsml_eL15_core_dom_sf"/>
</dbReference>
<dbReference type="InterPro" id="IPR000439">
    <property type="entry name" value="Ribosomal_eL15"/>
</dbReference>
<dbReference type="InterPro" id="IPR020926">
    <property type="entry name" value="Ribosomal_eL15_arc"/>
</dbReference>
<dbReference type="InterPro" id="IPR020925">
    <property type="entry name" value="Ribosomal_eL15_CS"/>
</dbReference>
<dbReference type="InterPro" id="IPR012678">
    <property type="entry name" value="Ribosomal_uL23/eL15/eS24_sf"/>
</dbReference>
<dbReference type="NCBIfam" id="NF003269">
    <property type="entry name" value="PRK04243.1"/>
    <property type="match status" value="1"/>
</dbReference>
<dbReference type="PANTHER" id="PTHR11847:SF4">
    <property type="entry name" value="LARGE RIBOSOMAL SUBUNIT PROTEIN EL15"/>
    <property type="match status" value="1"/>
</dbReference>
<dbReference type="PANTHER" id="PTHR11847">
    <property type="entry name" value="RIBOSOMAL PROTEIN L15"/>
    <property type="match status" value="1"/>
</dbReference>
<dbReference type="Pfam" id="PF00827">
    <property type="entry name" value="Ribosomal_L15e"/>
    <property type="match status" value="1"/>
</dbReference>
<dbReference type="SMART" id="SM01384">
    <property type="entry name" value="Ribosomal_L15e"/>
    <property type="match status" value="1"/>
</dbReference>
<dbReference type="SUPFAM" id="SSF54189">
    <property type="entry name" value="Ribosomal proteins S24e, L23 and L15e"/>
    <property type="match status" value="1"/>
</dbReference>
<dbReference type="PROSITE" id="PS01194">
    <property type="entry name" value="RIBOSOMAL_L15E"/>
    <property type="match status" value="1"/>
</dbReference>
<protein>
    <recommendedName>
        <fullName evidence="1">Large ribosomal subunit protein eL15</fullName>
    </recommendedName>
    <alternativeName>
        <fullName evidence="3">50S ribosomal protein L15e</fullName>
    </alternativeName>
</protein>
<feature type="chain" id="PRO_0000304208" description="Large ribosomal subunit protein eL15">
    <location>
        <begin position="1"/>
        <end position="196"/>
    </location>
</feature>
<feature type="region of interest" description="Disordered" evidence="2">
    <location>
        <begin position="159"/>
        <end position="196"/>
    </location>
</feature>
<feature type="compositionally biased region" description="Basic and acidic residues" evidence="2">
    <location>
        <begin position="179"/>
        <end position="196"/>
    </location>
</feature>
<sequence>MARSFYSHIREAWKTPKEGKLAELQWQRQQEWRDQGAIERIERPTRLDKARSLGYKAKQGVVVARVSVRKGTARKQRFKAGRRSKRQGVNKITRRKNLQRIAEERSGRKFRNLRVLNSYWVGEDGSQKWFEVILLDPEHGAIQNDDDLSWICDDSQRGRAYRGRTSAGQRGRGQQKRGKGTEHTRPSIRANDKRGK</sequence>